<accession>Q146K5</accession>
<sequence>MTQLNIAPASTDTAAASNNNAAAGTKQLARWRVADIVSLYELPFNDLMFQAQQTHREHFDANTVQLSTLLSIKTGGCEEDCAYCPQSVHHDTGLQADKLMPVDEVLAAAKVAKENGATRFCMGAAWRNPKDRHLEPIKDMIRGVKAMGLETCVTLGMLETHQAQGLREAGLDYYNHNLDTSPEFYGQIISTRTYQDRLDTLERVRDAGINVCCGGIVGLGESRRERAGLIAQLANMDPYPESVPINNLVQVEGTPLTGTEAIDPFEFVRTIAIARITMPRAMVRLSAGREQMNEALQAMCFLAGANSIFYGDQLLTTSNPQAEADRKLLERLGIRAEAAQQMPLDQSGCEHGCDKHAAPN</sequence>
<gene>
    <name evidence="1" type="primary">bioB</name>
    <name type="ordered locus">Bxeno_A0196</name>
    <name type="ORF">Bxe_A4266</name>
</gene>
<reference key="1">
    <citation type="journal article" date="2006" name="Proc. Natl. Acad. Sci. U.S.A.">
        <title>Burkholderia xenovorans LB400 harbors a multi-replicon, 9.73-Mbp genome shaped for versatility.</title>
        <authorList>
            <person name="Chain P.S.G."/>
            <person name="Denef V.J."/>
            <person name="Konstantinidis K.T."/>
            <person name="Vergez L.M."/>
            <person name="Agullo L."/>
            <person name="Reyes V.L."/>
            <person name="Hauser L."/>
            <person name="Cordova M."/>
            <person name="Gomez L."/>
            <person name="Gonzalez M."/>
            <person name="Land M."/>
            <person name="Lao V."/>
            <person name="Larimer F."/>
            <person name="LiPuma J.J."/>
            <person name="Mahenthiralingam E."/>
            <person name="Malfatti S.A."/>
            <person name="Marx C.J."/>
            <person name="Parnell J.J."/>
            <person name="Ramette A."/>
            <person name="Richardson P."/>
            <person name="Seeger M."/>
            <person name="Smith D."/>
            <person name="Spilker T."/>
            <person name="Sul W.J."/>
            <person name="Tsoi T.V."/>
            <person name="Ulrich L.E."/>
            <person name="Zhulin I.B."/>
            <person name="Tiedje J.M."/>
        </authorList>
    </citation>
    <scope>NUCLEOTIDE SEQUENCE [LARGE SCALE GENOMIC DNA]</scope>
    <source>
        <strain>LB400</strain>
    </source>
</reference>
<organism>
    <name type="scientific">Paraburkholderia xenovorans (strain LB400)</name>
    <dbReference type="NCBI Taxonomy" id="266265"/>
    <lineage>
        <taxon>Bacteria</taxon>
        <taxon>Pseudomonadati</taxon>
        <taxon>Pseudomonadota</taxon>
        <taxon>Betaproteobacteria</taxon>
        <taxon>Burkholderiales</taxon>
        <taxon>Burkholderiaceae</taxon>
        <taxon>Paraburkholderia</taxon>
    </lineage>
</organism>
<dbReference type="EC" id="2.8.1.6" evidence="1"/>
<dbReference type="EMBL" id="CP000270">
    <property type="protein sequence ID" value="ABE28734.1"/>
    <property type="molecule type" value="Genomic_DNA"/>
</dbReference>
<dbReference type="RefSeq" id="WP_011486579.1">
    <property type="nucleotide sequence ID" value="NC_007951.1"/>
</dbReference>
<dbReference type="SMR" id="Q146K5"/>
<dbReference type="STRING" id="266265.Bxe_A4266"/>
<dbReference type="KEGG" id="bxb:DR64_1942"/>
<dbReference type="KEGG" id="bxe:Bxe_A4266"/>
<dbReference type="PATRIC" id="fig|266265.5.peg.207"/>
<dbReference type="eggNOG" id="COG0502">
    <property type="taxonomic scope" value="Bacteria"/>
</dbReference>
<dbReference type="OrthoDB" id="9786826at2"/>
<dbReference type="UniPathway" id="UPA00078">
    <property type="reaction ID" value="UER00162"/>
</dbReference>
<dbReference type="Proteomes" id="UP000001817">
    <property type="component" value="Chromosome 1"/>
</dbReference>
<dbReference type="GO" id="GO:0051537">
    <property type="term" value="F:2 iron, 2 sulfur cluster binding"/>
    <property type="evidence" value="ECO:0007669"/>
    <property type="project" value="UniProtKB-KW"/>
</dbReference>
<dbReference type="GO" id="GO:0051539">
    <property type="term" value="F:4 iron, 4 sulfur cluster binding"/>
    <property type="evidence" value="ECO:0007669"/>
    <property type="project" value="UniProtKB-KW"/>
</dbReference>
<dbReference type="GO" id="GO:0004076">
    <property type="term" value="F:biotin synthase activity"/>
    <property type="evidence" value="ECO:0007669"/>
    <property type="project" value="UniProtKB-UniRule"/>
</dbReference>
<dbReference type="GO" id="GO:0005506">
    <property type="term" value="F:iron ion binding"/>
    <property type="evidence" value="ECO:0007669"/>
    <property type="project" value="UniProtKB-UniRule"/>
</dbReference>
<dbReference type="GO" id="GO:0009102">
    <property type="term" value="P:biotin biosynthetic process"/>
    <property type="evidence" value="ECO:0007669"/>
    <property type="project" value="UniProtKB-UniRule"/>
</dbReference>
<dbReference type="CDD" id="cd01335">
    <property type="entry name" value="Radical_SAM"/>
    <property type="match status" value="1"/>
</dbReference>
<dbReference type="FunFam" id="3.20.20.70:FF:000011">
    <property type="entry name" value="Biotin synthase"/>
    <property type="match status" value="1"/>
</dbReference>
<dbReference type="Gene3D" id="3.20.20.70">
    <property type="entry name" value="Aldolase class I"/>
    <property type="match status" value="1"/>
</dbReference>
<dbReference type="HAMAP" id="MF_01694">
    <property type="entry name" value="BioB"/>
    <property type="match status" value="1"/>
</dbReference>
<dbReference type="InterPro" id="IPR013785">
    <property type="entry name" value="Aldolase_TIM"/>
</dbReference>
<dbReference type="InterPro" id="IPR010722">
    <property type="entry name" value="BATS_dom"/>
</dbReference>
<dbReference type="InterPro" id="IPR002684">
    <property type="entry name" value="Biotin_synth/BioAB"/>
</dbReference>
<dbReference type="InterPro" id="IPR024177">
    <property type="entry name" value="Biotin_synthase"/>
</dbReference>
<dbReference type="InterPro" id="IPR006638">
    <property type="entry name" value="Elp3/MiaA/NifB-like_rSAM"/>
</dbReference>
<dbReference type="InterPro" id="IPR007197">
    <property type="entry name" value="rSAM"/>
</dbReference>
<dbReference type="NCBIfam" id="TIGR00433">
    <property type="entry name" value="bioB"/>
    <property type="match status" value="1"/>
</dbReference>
<dbReference type="PANTHER" id="PTHR22976">
    <property type="entry name" value="BIOTIN SYNTHASE"/>
    <property type="match status" value="1"/>
</dbReference>
<dbReference type="PANTHER" id="PTHR22976:SF2">
    <property type="entry name" value="BIOTIN SYNTHASE, MITOCHONDRIAL"/>
    <property type="match status" value="1"/>
</dbReference>
<dbReference type="Pfam" id="PF06968">
    <property type="entry name" value="BATS"/>
    <property type="match status" value="1"/>
</dbReference>
<dbReference type="Pfam" id="PF04055">
    <property type="entry name" value="Radical_SAM"/>
    <property type="match status" value="1"/>
</dbReference>
<dbReference type="PIRSF" id="PIRSF001619">
    <property type="entry name" value="Biotin_synth"/>
    <property type="match status" value="1"/>
</dbReference>
<dbReference type="SFLD" id="SFLDG01060">
    <property type="entry name" value="BATS_domain_containing"/>
    <property type="match status" value="1"/>
</dbReference>
<dbReference type="SFLD" id="SFLDF00272">
    <property type="entry name" value="biotin_synthase"/>
    <property type="match status" value="1"/>
</dbReference>
<dbReference type="SMART" id="SM00876">
    <property type="entry name" value="BATS"/>
    <property type="match status" value="1"/>
</dbReference>
<dbReference type="SMART" id="SM00729">
    <property type="entry name" value="Elp3"/>
    <property type="match status" value="1"/>
</dbReference>
<dbReference type="SUPFAM" id="SSF102114">
    <property type="entry name" value="Radical SAM enzymes"/>
    <property type="match status" value="1"/>
</dbReference>
<dbReference type="PROSITE" id="PS51918">
    <property type="entry name" value="RADICAL_SAM"/>
    <property type="match status" value="1"/>
</dbReference>
<protein>
    <recommendedName>
        <fullName evidence="1">Biotin synthase</fullName>
        <ecNumber evidence="1">2.8.1.6</ecNumber>
    </recommendedName>
</protein>
<feature type="chain" id="PRO_0000381278" description="Biotin synthase">
    <location>
        <begin position="1"/>
        <end position="360"/>
    </location>
</feature>
<feature type="domain" description="Radical SAM core" evidence="2">
    <location>
        <begin position="62"/>
        <end position="289"/>
    </location>
</feature>
<feature type="region of interest" description="Disordered" evidence="3">
    <location>
        <begin position="1"/>
        <end position="21"/>
    </location>
</feature>
<feature type="binding site" evidence="1">
    <location>
        <position position="77"/>
    </location>
    <ligand>
        <name>[4Fe-4S] cluster</name>
        <dbReference type="ChEBI" id="CHEBI:49883"/>
        <note>4Fe-4S-S-AdoMet</note>
    </ligand>
</feature>
<feature type="binding site" evidence="1">
    <location>
        <position position="81"/>
    </location>
    <ligand>
        <name>[4Fe-4S] cluster</name>
        <dbReference type="ChEBI" id="CHEBI:49883"/>
        <note>4Fe-4S-S-AdoMet</note>
    </ligand>
</feature>
<feature type="binding site" evidence="1">
    <location>
        <position position="84"/>
    </location>
    <ligand>
        <name>[4Fe-4S] cluster</name>
        <dbReference type="ChEBI" id="CHEBI:49883"/>
        <note>4Fe-4S-S-AdoMet</note>
    </ligand>
</feature>
<feature type="binding site" evidence="1">
    <location>
        <position position="121"/>
    </location>
    <ligand>
        <name>[2Fe-2S] cluster</name>
        <dbReference type="ChEBI" id="CHEBI:190135"/>
    </ligand>
</feature>
<feature type="binding site" evidence="1">
    <location>
        <position position="152"/>
    </location>
    <ligand>
        <name>[2Fe-2S] cluster</name>
        <dbReference type="ChEBI" id="CHEBI:190135"/>
    </ligand>
</feature>
<feature type="binding site" evidence="1">
    <location>
        <position position="212"/>
    </location>
    <ligand>
        <name>[2Fe-2S] cluster</name>
        <dbReference type="ChEBI" id="CHEBI:190135"/>
    </ligand>
</feature>
<feature type="binding site" evidence="1">
    <location>
        <position position="284"/>
    </location>
    <ligand>
        <name>[2Fe-2S] cluster</name>
        <dbReference type="ChEBI" id="CHEBI:190135"/>
    </ligand>
</feature>
<name>BIOB_PARXL</name>
<proteinExistence type="inferred from homology"/>
<comment type="function">
    <text evidence="1">Catalyzes the conversion of dethiobiotin (DTB) to biotin by the insertion of a sulfur atom into dethiobiotin via a radical-based mechanism.</text>
</comment>
<comment type="catalytic activity">
    <reaction evidence="1">
        <text>(4R,5S)-dethiobiotin + (sulfur carrier)-SH + 2 reduced [2Fe-2S]-[ferredoxin] + 2 S-adenosyl-L-methionine = (sulfur carrier)-H + biotin + 2 5'-deoxyadenosine + 2 L-methionine + 2 oxidized [2Fe-2S]-[ferredoxin]</text>
        <dbReference type="Rhea" id="RHEA:22060"/>
        <dbReference type="Rhea" id="RHEA-COMP:10000"/>
        <dbReference type="Rhea" id="RHEA-COMP:10001"/>
        <dbReference type="Rhea" id="RHEA-COMP:14737"/>
        <dbReference type="Rhea" id="RHEA-COMP:14739"/>
        <dbReference type="ChEBI" id="CHEBI:17319"/>
        <dbReference type="ChEBI" id="CHEBI:29917"/>
        <dbReference type="ChEBI" id="CHEBI:33737"/>
        <dbReference type="ChEBI" id="CHEBI:33738"/>
        <dbReference type="ChEBI" id="CHEBI:57586"/>
        <dbReference type="ChEBI" id="CHEBI:57844"/>
        <dbReference type="ChEBI" id="CHEBI:59789"/>
        <dbReference type="ChEBI" id="CHEBI:64428"/>
        <dbReference type="ChEBI" id="CHEBI:149473"/>
        <dbReference type="EC" id="2.8.1.6"/>
    </reaction>
</comment>
<comment type="cofactor">
    <cofactor evidence="1">
        <name>[4Fe-4S] cluster</name>
        <dbReference type="ChEBI" id="CHEBI:49883"/>
    </cofactor>
    <text evidence="1">Binds 1 [4Fe-4S] cluster. The cluster is coordinated with 3 cysteines and an exchangeable S-adenosyl-L-methionine.</text>
</comment>
<comment type="cofactor">
    <cofactor evidence="1">
        <name>[2Fe-2S] cluster</name>
        <dbReference type="ChEBI" id="CHEBI:190135"/>
    </cofactor>
    <text evidence="1">Binds 1 [2Fe-2S] cluster. The cluster is coordinated with 3 cysteines and 1 arginine.</text>
</comment>
<comment type="pathway">
    <text evidence="1">Cofactor biosynthesis; biotin biosynthesis; biotin from 7,8-diaminononanoate: step 2/2.</text>
</comment>
<comment type="subunit">
    <text evidence="1">Homodimer.</text>
</comment>
<comment type="similarity">
    <text evidence="1">Belongs to the radical SAM superfamily. Biotin synthase family.</text>
</comment>
<evidence type="ECO:0000255" key="1">
    <source>
        <dbReference type="HAMAP-Rule" id="MF_01694"/>
    </source>
</evidence>
<evidence type="ECO:0000255" key="2">
    <source>
        <dbReference type="PROSITE-ProRule" id="PRU01266"/>
    </source>
</evidence>
<evidence type="ECO:0000256" key="3">
    <source>
        <dbReference type="SAM" id="MobiDB-lite"/>
    </source>
</evidence>
<keyword id="KW-0001">2Fe-2S</keyword>
<keyword id="KW-0004">4Fe-4S</keyword>
<keyword id="KW-0093">Biotin biosynthesis</keyword>
<keyword id="KW-0408">Iron</keyword>
<keyword id="KW-0411">Iron-sulfur</keyword>
<keyword id="KW-0479">Metal-binding</keyword>
<keyword id="KW-1185">Reference proteome</keyword>
<keyword id="KW-0949">S-adenosyl-L-methionine</keyword>
<keyword id="KW-0808">Transferase</keyword>